<accession>A8F6A5</accession>
<proteinExistence type="inferred from homology"/>
<keyword id="KW-0963">Cytoplasm</keyword>
<keyword id="KW-0570">Pentose shunt</keyword>
<keyword id="KW-1185">Reference proteome</keyword>
<keyword id="KW-0704">Schiff base</keyword>
<keyword id="KW-0808">Transferase</keyword>
<protein>
    <recommendedName>
        <fullName evidence="1">Probable transaldolase</fullName>
        <ecNumber evidence="1">2.2.1.2</ecNumber>
    </recommendedName>
</protein>
<organism>
    <name type="scientific">Pseudothermotoga lettingae (strain ATCC BAA-301 / DSM 14385 / NBRC 107922 / TMO)</name>
    <name type="common">Thermotoga lettingae</name>
    <dbReference type="NCBI Taxonomy" id="416591"/>
    <lineage>
        <taxon>Bacteria</taxon>
        <taxon>Thermotogati</taxon>
        <taxon>Thermotogota</taxon>
        <taxon>Thermotogae</taxon>
        <taxon>Thermotogales</taxon>
        <taxon>Thermotogaceae</taxon>
        <taxon>Pseudothermotoga</taxon>
    </lineage>
</organism>
<evidence type="ECO:0000255" key="1">
    <source>
        <dbReference type="HAMAP-Rule" id="MF_00494"/>
    </source>
</evidence>
<feature type="chain" id="PRO_1000126366" description="Probable transaldolase">
    <location>
        <begin position="1"/>
        <end position="217"/>
    </location>
</feature>
<feature type="active site" description="Schiff-base intermediate with substrate" evidence="1">
    <location>
        <position position="83"/>
    </location>
</feature>
<gene>
    <name evidence="1" type="primary">tal</name>
    <name type="ordered locus">Tlet_1124</name>
</gene>
<comment type="function">
    <text evidence="1">Transaldolase is important for the balance of metabolites in the pentose-phosphate pathway.</text>
</comment>
<comment type="catalytic activity">
    <reaction evidence="1">
        <text>D-sedoheptulose 7-phosphate + D-glyceraldehyde 3-phosphate = D-erythrose 4-phosphate + beta-D-fructose 6-phosphate</text>
        <dbReference type="Rhea" id="RHEA:17053"/>
        <dbReference type="ChEBI" id="CHEBI:16897"/>
        <dbReference type="ChEBI" id="CHEBI:57483"/>
        <dbReference type="ChEBI" id="CHEBI:57634"/>
        <dbReference type="ChEBI" id="CHEBI:59776"/>
        <dbReference type="EC" id="2.2.1.2"/>
    </reaction>
</comment>
<comment type="pathway">
    <text evidence="1">Carbohydrate degradation; pentose phosphate pathway; D-glyceraldehyde 3-phosphate and beta-D-fructose 6-phosphate from D-ribose 5-phosphate and D-xylulose 5-phosphate (non-oxidative stage): step 2/3.</text>
</comment>
<comment type="subcellular location">
    <subcellularLocation>
        <location evidence="1">Cytoplasm</location>
    </subcellularLocation>
</comment>
<comment type="similarity">
    <text evidence="1">Belongs to the transaldolase family. Type 3B subfamily.</text>
</comment>
<sequence>MKIFLDTANLEEIKTAADWGVIDGVTTNPTLVAKENVPFEKRIKEICEIVKGPVSAEVTALNWNEMIEEAKKLAEIDKHVVIKIPMTKDGLKATKVLSEENIAVNMTLIFSSAQALLAMKAGARYVSPFVGRLDDISSDGMKLIEEIVQIIENYDFRAEIIVASVRHPMHIVHAALIGADIVTVPFKVLQSMFNHPLTDIGIDRFMKDWKDYQNRTK</sequence>
<name>TAL_PSELT</name>
<dbReference type="EC" id="2.2.1.2" evidence="1"/>
<dbReference type="EMBL" id="CP000812">
    <property type="protein sequence ID" value="ABV33689.1"/>
    <property type="molecule type" value="Genomic_DNA"/>
</dbReference>
<dbReference type="RefSeq" id="WP_012003170.1">
    <property type="nucleotide sequence ID" value="NC_009828.1"/>
</dbReference>
<dbReference type="SMR" id="A8F6A5"/>
<dbReference type="STRING" id="416591.Tlet_1124"/>
<dbReference type="KEGG" id="tle:Tlet_1124"/>
<dbReference type="eggNOG" id="COG0176">
    <property type="taxonomic scope" value="Bacteria"/>
</dbReference>
<dbReference type="HOGENOM" id="CLU_079764_0_0_0"/>
<dbReference type="OrthoDB" id="9807051at2"/>
<dbReference type="UniPathway" id="UPA00115">
    <property type="reaction ID" value="UER00414"/>
</dbReference>
<dbReference type="Proteomes" id="UP000002016">
    <property type="component" value="Chromosome"/>
</dbReference>
<dbReference type="GO" id="GO:0005737">
    <property type="term" value="C:cytoplasm"/>
    <property type="evidence" value="ECO:0007669"/>
    <property type="project" value="UniProtKB-SubCell"/>
</dbReference>
<dbReference type="GO" id="GO:0016832">
    <property type="term" value="F:aldehyde-lyase activity"/>
    <property type="evidence" value="ECO:0007669"/>
    <property type="project" value="InterPro"/>
</dbReference>
<dbReference type="GO" id="GO:0004801">
    <property type="term" value="F:transaldolase activity"/>
    <property type="evidence" value="ECO:0007669"/>
    <property type="project" value="UniProtKB-UniRule"/>
</dbReference>
<dbReference type="GO" id="GO:0005975">
    <property type="term" value="P:carbohydrate metabolic process"/>
    <property type="evidence" value="ECO:0007669"/>
    <property type="project" value="InterPro"/>
</dbReference>
<dbReference type="GO" id="GO:0006098">
    <property type="term" value="P:pentose-phosphate shunt"/>
    <property type="evidence" value="ECO:0007669"/>
    <property type="project" value="UniProtKB-UniRule"/>
</dbReference>
<dbReference type="CDD" id="cd00956">
    <property type="entry name" value="Transaldolase_FSA"/>
    <property type="match status" value="1"/>
</dbReference>
<dbReference type="FunFam" id="3.20.20.70:FF:000018">
    <property type="entry name" value="Probable transaldolase"/>
    <property type="match status" value="1"/>
</dbReference>
<dbReference type="Gene3D" id="3.20.20.70">
    <property type="entry name" value="Aldolase class I"/>
    <property type="match status" value="1"/>
</dbReference>
<dbReference type="HAMAP" id="MF_00494">
    <property type="entry name" value="Transaldolase_3b"/>
    <property type="match status" value="1"/>
</dbReference>
<dbReference type="InterPro" id="IPR013785">
    <property type="entry name" value="Aldolase_TIM"/>
</dbReference>
<dbReference type="InterPro" id="IPR001585">
    <property type="entry name" value="TAL/FSA"/>
</dbReference>
<dbReference type="InterPro" id="IPR022999">
    <property type="entry name" value="Transaldolase_3B"/>
</dbReference>
<dbReference type="InterPro" id="IPR004731">
    <property type="entry name" value="Transaldolase_3B/F6P_aldolase"/>
</dbReference>
<dbReference type="InterPro" id="IPR018225">
    <property type="entry name" value="Transaldolase_AS"/>
</dbReference>
<dbReference type="InterPro" id="IPR033919">
    <property type="entry name" value="TSA/FSA_arc/bac"/>
</dbReference>
<dbReference type="NCBIfam" id="TIGR00875">
    <property type="entry name" value="fsa_talC_mipB"/>
    <property type="match status" value="1"/>
</dbReference>
<dbReference type="PANTHER" id="PTHR10683:SF40">
    <property type="entry name" value="FRUCTOSE-6-PHOSPHATE ALDOLASE 1-RELATED"/>
    <property type="match status" value="1"/>
</dbReference>
<dbReference type="PANTHER" id="PTHR10683">
    <property type="entry name" value="TRANSALDOLASE"/>
    <property type="match status" value="1"/>
</dbReference>
<dbReference type="Pfam" id="PF00923">
    <property type="entry name" value="TAL_FSA"/>
    <property type="match status" value="1"/>
</dbReference>
<dbReference type="SUPFAM" id="SSF51569">
    <property type="entry name" value="Aldolase"/>
    <property type="match status" value="1"/>
</dbReference>
<dbReference type="PROSITE" id="PS01054">
    <property type="entry name" value="TRANSALDOLASE_1"/>
    <property type="match status" value="1"/>
</dbReference>
<dbReference type="PROSITE" id="PS00958">
    <property type="entry name" value="TRANSALDOLASE_2"/>
    <property type="match status" value="1"/>
</dbReference>
<reference key="1">
    <citation type="submission" date="2007-08" db="EMBL/GenBank/DDBJ databases">
        <title>Complete sequence of Thermotoga lettingae TMO.</title>
        <authorList>
            <consortium name="US DOE Joint Genome Institute"/>
            <person name="Copeland A."/>
            <person name="Lucas S."/>
            <person name="Lapidus A."/>
            <person name="Barry K."/>
            <person name="Glavina del Rio T."/>
            <person name="Dalin E."/>
            <person name="Tice H."/>
            <person name="Pitluck S."/>
            <person name="Foster B."/>
            <person name="Bruce D."/>
            <person name="Schmutz J."/>
            <person name="Larimer F."/>
            <person name="Land M."/>
            <person name="Hauser L."/>
            <person name="Kyrpides N."/>
            <person name="Mikhailova N."/>
            <person name="Nelson K."/>
            <person name="Gogarten J.P."/>
            <person name="Noll K."/>
            <person name="Richardson P."/>
        </authorList>
    </citation>
    <scope>NUCLEOTIDE SEQUENCE [LARGE SCALE GENOMIC DNA]</scope>
    <source>
        <strain>ATCC BAA-301 / DSM 14385 / NBRC 107922 / TMO</strain>
    </source>
</reference>